<name>CORE5_ADE02</name>
<gene>
    <name evidence="1" type="primary">L2</name>
</gene>
<sequence length="369" mass="41721">MSKRKIKEEMLQVIAPEIYGPPKKEEQDYKPRKLKRVKKKKKDDDDDELDDEVELLHATAPRRRVQWKGRRVRRVLRPGTTVVFTPGERSTRTYKRVYDEVYGDEDLLEQANERLGEFAYGKRHKDMLALPLDEGNPTPSLKPVTLQQVLPTLAPSEEKRGLKRESGDLAPTVQLMVPKRQRLEDVLEKMTVEPGLEPEVRVRPIKQVAPGLGVQTVDVQIPTTSSTSIATATEGMETQTSPVASAVADAAVQAAAAAASKTSTEVQTDPWMFRVSAPRRPRRSRKYGTASALLPEYALHPSIAPTPGYRGYTYRPRRRATTRRRTTTGTRRRRRRRQPVLAPISVRRVAREGGRTLVLPTARYHPSIV</sequence>
<evidence type="ECO:0000255" key="1">
    <source>
        <dbReference type="HAMAP-Rule" id="MF_04053"/>
    </source>
</evidence>
<evidence type="ECO:0000256" key="2">
    <source>
        <dbReference type="SAM" id="MobiDB-lite"/>
    </source>
</evidence>
<evidence type="ECO:0000269" key="3">
    <source>
    </source>
</evidence>
<evidence type="ECO:0000269" key="4">
    <source>
    </source>
</evidence>
<evidence type="ECO:0000269" key="5">
    <source>
    </source>
</evidence>
<evidence type="ECO:0000269" key="6">
    <source>
    </source>
</evidence>
<evidence type="ECO:0000269" key="7">
    <source>
    </source>
</evidence>
<evidence type="ECO:0000269" key="8">
    <source>
    </source>
</evidence>
<evidence type="ECO:0000305" key="9"/>
<accession>P03267</accession>
<dbReference type="EMBL" id="J01917">
    <property type="protein sequence ID" value="AAA92213.1"/>
    <property type="molecule type" value="Genomic_DNA"/>
</dbReference>
<dbReference type="PIR" id="A03837">
    <property type="entry name" value="FOADM2"/>
</dbReference>
<dbReference type="RefSeq" id="AP_000172.1">
    <property type="nucleotide sequence ID" value="AC_000007.1"/>
</dbReference>
<dbReference type="RefSeq" id="NP_040523.1">
    <property type="nucleotide sequence ID" value="NC_001405.1"/>
</dbReference>
<dbReference type="iPTMnet" id="P03267"/>
<dbReference type="GeneID" id="2652996"/>
<dbReference type="Proteomes" id="UP000008167">
    <property type="component" value="Segment"/>
</dbReference>
<dbReference type="GO" id="GO:0044196">
    <property type="term" value="C:host cell nucleolus"/>
    <property type="evidence" value="ECO:0000314"/>
    <property type="project" value="UniProtKB"/>
</dbReference>
<dbReference type="GO" id="GO:0042025">
    <property type="term" value="C:host cell nucleus"/>
    <property type="evidence" value="ECO:0000314"/>
    <property type="project" value="UniProtKB"/>
</dbReference>
<dbReference type="GO" id="GO:0044423">
    <property type="term" value="C:virion component"/>
    <property type="evidence" value="ECO:0007669"/>
    <property type="project" value="UniProtKB-UniRule"/>
</dbReference>
<dbReference type="GO" id="GO:0003677">
    <property type="term" value="F:DNA binding"/>
    <property type="evidence" value="ECO:0007669"/>
    <property type="project" value="UniProtKB-UniRule"/>
</dbReference>
<dbReference type="GO" id="GO:0019076">
    <property type="term" value="P:viral release from host cell"/>
    <property type="evidence" value="ECO:0007669"/>
    <property type="project" value="UniProtKB-UniRule"/>
</dbReference>
<dbReference type="HAMAP" id="MF_04053">
    <property type="entry name" value="ADV_CORE5"/>
    <property type="match status" value="1"/>
</dbReference>
<dbReference type="InterPro" id="IPR005608">
    <property type="entry name" value="Adeno_V"/>
</dbReference>
<dbReference type="Pfam" id="PF03910">
    <property type="entry name" value="Adeno_PV"/>
    <property type="match status" value="1"/>
</dbReference>
<proteinExistence type="evidence at protein level"/>
<keyword id="KW-0903">Direct protein sequencing</keyword>
<keyword id="KW-0238">DNA-binding</keyword>
<keyword id="KW-1048">Host nucleus</keyword>
<keyword id="KW-0426">Late protein</keyword>
<keyword id="KW-0597">Phosphoprotein</keyword>
<keyword id="KW-1185">Reference proteome</keyword>
<keyword id="KW-0118">Viral capsid assembly</keyword>
<keyword id="KW-1188">Viral release from host cell</keyword>
<keyword id="KW-0946">Virion</keyword>
<protein>
    <recommendedName>
        <fullName evidence="1">Core-capsid bridging protein</fullName>
    </recommendedName>
    <alternativeName>
        <fullName evidence="1">Core protein V</fullName>
    </alternativeName>
</protein>
<reference key="1">
    <citation type="journal article" date="1984" name="J. Biol. Chem.">
        <title>Genes encoding the core proteins of adenovirus type 2.</title>
        <authorList>
            <person name="Alestroem P."/>
            <person name="Akusjaervi G."/>
            <person name="Lager M."/>
            <person name="Yeh-kai L."/>
            <person name="Pettersson U."/>
        </authorList>
    </citation>
    <scope>NUCLEOTIDE SEQUENCE [GENOMIC DNA]</scope>
</reference>
<reference key="2">
    <citation type="journal article" date="2012" name="Virology">
        <title>The phosphoproteome of the adenovirus type 2 virion.</title>
        <authorList>
            <person name="Bergstrom Lind S."/>
            <person name="Artemenko K.A."/>
            <person name="Elfineh L."/>
            <person name="Zhao Y."/>
            <person name="Bergquist J."/>
            <person name="Pettersson U."/>
        </authorList>
    </citation>
    <scope>PROTEIN SEQUENCE OF 75-89 AND 164-179</scope>
    <scope>PHOSPHORYLATION AT THR-85 AND SER-166</scope>
</reference>
<reference key="3">
    <citation type="journal article" date="1985" name="J. Virol.">
        <title>Interactions among the three adenovirus core proteins.</title>
        <authorList>
            <person name="Chatterjee P.K."/>
            <person name="Vayda M.E."/>
            <person name="Flint S.J."/>
        </authorList>
    </citation>
    <scope>INTERACTION WITH THE HISTONE-LIKE NUCLEOPROTEIN AND PROTEIN X</scope>
</reference>
<reference key="4">
    <citation type="journal article" date="1998" name="J. Gen. Virol.">
        <title>Adenovirus core protein V is delivered by the invading virus to the nucleus of the infected cell and later in infection is associated with nucleoli.</title>
        <authorList>
            <person name="Matthews D.A."/>
            <person name="Russell W.C."/>
        </authorList>
    </citation>
    <scope>SUBCELLULAR LOCATION</scope>
    <scope>INTERACTION WITH THE ENDOSOME LYSIS PROTEIN VI</scope>
</reference>
<reference key="5">
    <citation type="journal article" date="2007" name="FEBS Lett.">
        <title>Physical and functional interaction between a nucleolar protein nucleophosmin/B23 and adenovirus basic core proteins.</title>
        <authorList>
            <person name="Samad M.A."/>
            <person name="Okuwaki M."/>
            <person name="Haruki H."/>
            <person name="Nagata K."/>
        </authorList>
    </citation>
    <scope>INTERACTION WITH HOST NPM1</scope>
</reference>
<reference key="6">
    <citation type="journal article" date="2011" name="J. Virol.">
        <title>Stepwise loss of fluorescent core protein V from human adenovirus during entry into cells.</title>
        <authorList>
            <person name="Puntener D."/>
            <person name="Engelke M.F."/>
            <person name="Ruzsics Z."/>
            <person name="Strunze S."/>
            <person name="Wilhelm C."/>
            <person name="Greber U.F."/>
        </authorList>
    </citation>
    <scope>FUNCTION</scope>
</reference>
<reference key="7">
    <citation type="journal article" date="2012" name="Virology">
        <title>Adenoviral protein V promotes a process of viral assembly through nucleophosmin 1.</title>
        <authorList>
            <person name="Ugai H."/>
            <person name="Dobbins G.C."/>
            <person name="Wang M."/>
            <person name="Le L.P."/>
            <person name="Matthews D.A."/>
            <person name="Curiel D.T."/>
        </authorList>
    </citation>
    <scope>FUNCTION</scope>
</reference>
<reference key="8">
    <citation type="journal article" date="2012" name="Viruses">
        <title>Latest insights on adenovirus structure and assembly.</title>
        <authorList>
            <person name="San Martin C."/>
        </authorList>
    </citation>
    <scope>REVIEW</scope>
</reference>
<reference key="9">
    <citation type="journal article" date="2012" name="Nucleic Acids Res.">
        <title>Chromatin structure of adenovirus DNA throughout infection.</title>
        <authorList>
            <person name="Giberson A.N."/>
            <person name="Davidson A.R."/>
            <person name="Parks R.J."/>
        </authorList>
    </citation>
    <scope>REVIEW</scope>
</reference>
<comment type="function">
    <text evidence="1 4 5">Associates loosely with the viral DNA to form an outer shell around the nucleoprotein-DNA complex and links it with the capsid by binding the endosome lysis protein. Dissociates from the viral genome during entry. Might be involved in nuclear capsid assembly of the viral particles through its association with NPM1/nucleophosmin.</text>
</comment>
<comment type="subunit">
    <text evidence="1 3 7 8">Monomer. Homodimer. Exists in equilibrium between monomers and dimers in solution. Interacts with the histone-like nucleoprotein; this interactions bridge the virus core to the capsid. Interacts with core protein X; this interactions bridge the virus core to the capsid. Interacts with the endosome lysis protein VI; this interactions bridge the virus core to the capsid. Interacts with the peripentonal hexons. Interacts with host NPM1; this interaction might play a role in virus assembly.</text>
</comment>
<comment type="subcellular location">
    <subcellularLocation>
        <location evidence="1">Virion</location>
    </subcellularLocation>
    <subcellularLocation>
        <location evidence="1 8">Host nucleus</location>
        <location evidence="1 8">Host nucleolus</location>
    </subcellularLocation>
    <text evidence="1">Located inside the capsid (core). Present in 157 copies per virion. Localizes in the nucleoli during infection, then translocates from the nucleoli to the nucleoplasm as the infection progresses and is finally incorporated into the viral particles.</text>
</comment>
<comment type="induction">
    <text evidence="1">Expressed in the late phase of the viral replicative cycle.</text>
</comment>
<comment type="miscellaneous">
    <text evidence="1">All late proteins expressed from the major late promoter are produced by alternative splicing and alternative polyadenylation of the same gene giving rise to non-overlapping ORFs. A leader sequence is present in the N-terminus of all these mRNAs and is recognized by the viral shutoff protein to provide expression although conventional translation via ribosome scanning from the cap has been shut off in the host cell.</text>
</comment>
<comment type="miscellaneous">
    <text evidence="1">This protein is only encoded by mastadenoviruses, and may therefore play a role in mammals tropism.</text>
</comment>
<comment type="similarity">
    <text evidence="1 9">Belongs to the adenoviridae core-capsid bridging protein family.</text>
</comment>
<organismHost>
    <name type="scientific">Homo sapiens</name>
    <name type="common">Human</name>
    <dbReference type="NCBI Taxonomy" id="9606"/>
</organismHost>
<organism>
    <name type="scientific">Human adenovirus C serotype 2</name>
    <name type="common">HAdV-2</name>
    <name type="synonym">Human adenovirus 2</name>
    <dbReference type="NCBI Taxonomy" id="10515"/>
    <lineage>
        <taxon>Viruses</taxon>
        <taxon>Varidnaviria</taxon>
        <taxon>Bamfordvirae</taxon>
        <taxon>Preplasmiviricota</taxon>
        <taxon>Tectiliviricetes</taxon>
        <taxon>Rowavirales</taxon>
        <taxon>Adenoviridae</taxon>
        <taxon>Mastadenovirus</taxon>
        <taxon>Human mastadenovirus C</taxon>
    </lineage>
</organism>
<feature type="chain" id="PRO_0000221903" description="Core-capsid bridging protein">
    <location>
        <begin position="1"/>
        <end position="369"/>
    </location>
</feature>
<feature type="region of interest" description="Disordered" evidence="2">
    <location>
        <begin position="15"/>
        <end position="50"/>
    </location>
</feature>
<feature type="region of interest" description="Disordered" evidence="2">
    <location>
        <begin position="307"/>
        <end position="342"/>
    </location>
</feature>
<feature type="compositionally biased region" description="Basic and acidic residues" evidence="2">
    <location>
        <begin position="22"/>
        <end position="31"/>
    </location>
</feature>
<feature type="compositionally biased region" description="Basic residues" evidence="2">
    <location>
        <begin position="32"/>
        <end position="41"/>
    </location>
</feature>
<feature type="compositionally biased region" description="Basic residues" evidence="2">
    <location>
        <begin position="315"/>
        <end position="338"/>
    </location>
</feature>
<feature type="modified residue" description="Phosphothreonine; by host" evidence="6">
    <location>
        <position position="85"/>
    </location>
</feature>
<feature type="modified residue" description="Phosphoserine; by host" evidence="6">
    <location>
        <position position="166"/>
    </location>
</feature>